<protein>
    <recommendedName>
        <fullName>Uncharacterized protein MJ0419</fullName>
    </recommendedName>
</protein>
<accession>Q57862</accession>
<sequence>MLLLHWDNMGKIELHHVFVMLSCIYLIFSDISINSAVVFLFSSIFFYISFTAGKRLYYLIGIDKENLKINLKKHYNFGIFLMIVGLIAVTSDLIWVKDVPLFNPLSRKFLNVYFTTLSHLFLVGWAIVVASSNIDKKKILLYTIIFSILIMLLGYRTNVLVLLISVGAILYYKNKISNREILKYGILVFVILLGLSILRLYALGVEGNPITSRISLTMSIYDIIFNNFNGVFNGYIHYSAVFSYLGLCNGARTVIAKTLGIYNVSITPTIVGAVIGDYGTLAIIPYFGILGIFLGFFYKLAKDVKGIYLGIYGILFAYTLIGIESGILDIDVILYYFFGLILCIYAILLRKLKR</sequence>
<gene>
    <name type="ordered locus">MJ0419</name>
</gene>
<comment type="subcellular location">
    <subcellularLocation>
        <location evidence="2">Cell membrane</location>
        <topology evidence="2">Multi-pass membrane protein</topology>
    </subcellularLocation>
</comment>
<organism>
    <name type="scientific">Methanocaldococcus jannaschii (strain ATCC 43067 / DSM 2661 / JAL-1 / JCM 10045 / NBRC 100440)</name>
    <name type="common">Methanococcus jannaschii</name>
    <dbReference type="NCBI Taxonomy" id="243232"/>
    <lineage>
        <taxon>Archaea</taxon>
        <taxon>Methanobacteriati</taxon>
        <taxon>Methanobacteriota</taxon>
        <taxon>Methanomada group</taxon>
        <taxon>Methanococci</taxon>
        <taxon>Methanococcales</taxon>
        <taxon>Methanocaldococcaceae</taxon>
        <taxon>Methanocaldococcus</taxon>
    </lineage>
</organism>
<keyword id="KW-1003">Cell membrane</keyword>
<keyword id="KW-0472">Membrane</keyword>
<keyword id="KW-1185">Reference proteome</keyword>
<keyword id="KW-0812">Transmembrane</keyword>
<keyword id="KW-1133">Transmembrane helix</keyword>
<dbReference type="EMBL" id="L77117">
    <property type="protein sequence ID" value="AAB98417.1"/>
    <property type="molecule type" value="Genomic_DNA"/>
</dbReference>
<dbReference type="PIR" id="C64352">
    <property type="entry name" value="C64352"/>
</dbReference>
<dbReference type="RefSeq" id="WP_010869918.1">
    <property type="nucleotide sequence ID" value="NC_000909.1"/>
</dbReference>
<dbReference type="STRING" id="243232.MJ_0419"/>
<dbReference type="PaxDb" id="243232-MJ_0419"/>
<dbReference type="DNASU" id="1451279"/>
<dbReference type="EnsemblBacteria" id="AAB98417">
    <property type="protein sequence ID" value="AAB98417"/>
    <property type="gene ID" value="MJ_0419"/>
</dbReference>
<dbReference type="GeneID" id="1451279"/>
<dbReference type="KEGG" id="mja:MJ_0419"/>
<dbReference type="eggNOG" id="arCOG03206">
    <property type="taxonomic scope" value="Archaea"/>
</dbReference>
<dbReference type="HOGENOM" id="CLU_764231_0_0_2"/>
<dbReference type="InParanoid" id="Q57862"/>
<dbReference type="OrthoDB" id="82276at2157"/>
<dbReference type="PhylomeDB" id="Q57862"/>
<dbReference type="Proteomes" id="UP000000805">
    <property type="component" value="Chromosome"/>
</dbReference>
<dbReference type="GO" id="GO:0005886">
    <property type="term" value="C:plasma membrane"/>
    <property type="evidence" value="ECO:0007669"/>
    <property type="project" value="UniProtKB-SubCell"/>
</dbReference>
<dbReference type="InterPro" id="IPR002760">
    <property type="entry name" value="O_anti_polymase"/>
</dbReference>
<dbReference type="Pfam" id="PF01901">
    <property type="entry name" value="O_anti_polymase"/>
    <property type="match status" value="1"/>
</dbReference>
<feature type="chain" id="PRO_0000106865" description="Uncharacterized protein MJ0419">
    <location>
        <begin position="1"/>
        <end position="354"/>
    </location>
</feature>
<feature type="transmembrane region" description="Helical" evidence="1">
    <location>
        <begin position="9"/>
        <end position="29"/>
    </location>
</feature>
<feature type="transmembrane region" description="Helical" evidence="1">
    <location>
        <begin position="31"/>
        <end position="51"/>
    </location>
</feature>
<feature type="transmembrane region" description="Helical" evidence="1">
    <location>
        <begin position="76"/>
        <end position="96"/>
    </location>
</feature>
<feature type="transmembrane region" description="Helical" evidence="1">
    <location>
        <begin position="109"/>
        <end position="129"/>
    </location>
</feature>
<feature type="transmembrane region" description="Helical" evidence="1">
    <location>
        <begin position="144"/>
        <end position="164"/>
    </location>
</feature>
<feature type="transmembrane region" description="Helical" evidence="1">
    <location>
        <begin position="185"/>
        <end position="205"/>
    </location>
</feature>
<feature type="transmembrane region" description="Helical" evidence="1">
    <location>
        <begin position="278"/>
        <end position="298"/>
    </location>
</feature>
<feature type="transmembrane region" description="Helical" evidence="1">
    <location>
        <begin position="306"/>
        <end position="326"/>
    </location>
</feature>
<feature type="transmembrane region" description="Helical" evidence="1">
    <location>
        <begin position="327"/>
        <end position="347"/>
    </location>
</feature>
<evidence type="ECO:0000255" key="1"/>
<evidence type="ECO:0000305" key="2"/>
<reference key="1">
    <citation type="journal article" date="1996" name="Science">
        <title>Complete genome sequence of the methanogenic archaeon, Methanococcus jannaschii.</title>
        <authorList>
            <person name="Bult C.J."/>
            <person name="White O."/>
            <person name="Olsen G.J."/>
            <person name="Zhou L."/>
            <person name="Fleischmann R.D."/>
            <person name="Sutton G.G."/>
            <person name="Blake J.A."/>
            <person name="FitzGerald L.M."/>
            <person name="Clayton R.A."/>
            <person name="Gocayne J.D."/>
            <person name="Kerlavage A.R."/>
            <person name="Dougherty B.A."/>
            <person name="Tomb J.-F."/>
            <person name="Adams M.D."/>
            <person name="Reich C.I."/>
            <person name="Overbeek R."/>
            <person name="Kirkness E.F."/>
            <person name="Weinstock K.G."/>
            <person name="Merrick J.M."/>
            <person name="Glodek A."/>
            <person name="Scott J.L."/>
            <person name="Geoghagen N.S.M."/>
            <person name="Weidman J.F."/>
            <person name="Fuhrmann J.L."/>
            <person name="Nguyen D."/>
            <person name="Utterback T.R."/>
            <person name="Kelley J.M."/>
            <person name="Peterson J.D."/>
            <person name="Sadow P.W."/>
            <person name="Hanna M.C."/>
            <person name="Cotton M.D."/>
            <person name="Roberts K.M."/>
            <person name="Hurst M.A."/>
            <person name="Kaine B.P."/>
            <person name="Borodovsky M."/>
            <person name="Klenk H.-P."/>
            <person name="Fraser C.M."/>
            <person name="Smith H.O."/>
            <person name="Woese C.R."/>
            <person name="Venter J.C."/>
        </authorList>
    </citation>
    <scope>NUCLEOTIDE SEQUENCE [LARGE SCALE GENOMIC DNA]</scope>
    <source>
        <strain>ATCC 43067 / DSM 2661 / JAL-1 / JCM 10045 / NBRC 100440</strain>
    </source>
</reference>
<proteinExistence type="predicted"/>
<name>Y419_METJA</name>